<feature type="chain" id="PRO_0000240805" description="DNA-directed RNA polymerase subunit beta'">
    <location>
        <begin position="1"/>
        <end position="1396"/>
    </location>
</feature>
<feature type="binding site" evidence="1">
    <location>
        <position position="70"/>
    </location>
    <ligand>
        <name>Zn(2+)</name>
        <dbReference type="ChEBI" id="CHEBI:29105"/>
        <label>1</label>
    </ligand>
</feature>
<feature type="binding site" evidence="1">
    <location>
        <position position="72"/>
    </location>
    <ligand>
        <name>Zn(2+)</name>
        <dbReference type="ChEBI" id="CHEBI:29105"/>
        <label>1</label>
    </ligand>
</feature>
<feature type="binding site" evidence="1">
    <location>
        <position position="85"/>
    </location>
    <ligand>
        <name>Zn(2+)</name>
        <dbReference type="ChEBI" id="CHEBI:29105"/>
        <label>1</label>
    </ligand>
</feature>
<feature type="binding site" evidence="1">
    <location>
        <position position="88"/>
    </location>
    <ligand>
        <name>Zn(2+)</name>
        <dbReference type="ChEBI" id="CHEBI:29105"/>
        <label>1</label>
    </ligand>
</feature>
<feature type="binding site" evidence="1">
    <location>
        <position position="460"/>
    </location>
    <ligand>
        <name>Mg(2+)</name>
        <dbReference type="ChEBI" id="CHEBI:18420"/>
    </ligand>
</feature>
<feature type="binding site" evidence="1">
    <location>
        <position position="462"/>
    </location>
    <ligand>
        <name>Mg(2+)</name>
        <dbReference type="ChEBI" id="CHEBI:18420"/>
    </ligand>
</feature>
<feature type="binding site" evidence="1">
    <location>
        <position position="464"/>
    </location>
    <ligand>
        <name>Mg(2+)</name>
        <dbReference type="ChEBI" id="CHEBI:18420"/>
    </ligand>
</feature>
<feature type="binding site" evidence="1">
    <location>
        <position position="814"/>
    </location>
    <ligand>
        <name>Zn(2+)</name>
        <dbReference type="ChEBI" id="CHEBI:29105"/>
        <label>2</label>
    </ligand>
</feature>
<feature type="binding site" evidence="1">
    <location>
        <position position="889"/>
    </location>
    <ligand>
        <name>Zn(2+)</name>
        <dbReference type="ChEBI" id="CHEBI:29105"/>
        <label>2</label>
    </ligand>
</feature>
<feature type="binding site" evidence="1">
    <location>
        <position position="896"/>
    </location>
    <ligand>
        <name>Zn(2+)</name>
        <dbReference type="ChEBI" id="CHEBI:29105"/>
        <label>2</label>
    </ligand>
</feature>
<feature type="binding site" evidence="1">
    <location>
        <position position="899"/>
    </location>
    <ligand>
        <name>Zn(2+)</name>
        <dbReference type="ChEBI" id="CHEBI:29105"/>
        <label>2</label>
    </ligand>
</feature>
<reference key="1">
    <citation type="journal article" date="2005" name="Nucleic Acids Res.">
        <title>Genomic blueprint of Hahella chejuensis, a marine microbe producing an algicidal agent.</title>
        <authorList>
            <person name="Jeong H."/>
            <person name="Yim J.H."/>
            <person name="Lee C."/>
            <person name="Choi S.-H."/>
            <person name="Park Y.K."/>
            <person name="Yoon S.H."/>
            <person name="Hur C.-G."/>
            <person name="Kang H.-Y."/>
            <person name="Kim D."/>
            <person name="Lee H.H."/>
            <person name="Park K.H."/>
            <person name="Park S.-H."/>
            <person name="Park H.-S."/>
            <person name="Lee H.K."/>
            <person name="Oh T.K."/>
            <person name="Kim J.F."/>
        </authorList>
    </citation>
    <scope>NUCLEOTIDE SEQUENCE [LARGE SCALE GENOMIC DNA]</scope>
    <source>
        <strain>KCTC 2396</strain>
    </source>
</reference>
<proteinExistence type="inferred from homology"/>
<comment type="function">
    <text evidence="1">DNA-dependent RNA polymerase catalyzes the transcription of DNA into RNA using the four ribonucleoside triphosphates as substrates.</text>
</comment>
<comment type="catalytic activity">
    <reaction evidence="1">
        <text>RNA(n) + a ribonucleoside 5'-triphosphate = RNA(n+1) + diphosphate</text>
        <dbReference type="Rhea" id="RHEA:21248"/>
        <dbReference type="Rhea" id="RHEA-COMP:14527"/>
        <dbReference type="Rhea" id="RHEA-COMP:17342"/>
        <dbReference type="ChEBI" id="CHEBI:33019"/>
        <dbReference type="ChEBI" id="CHEBI:61557"/>
        <dbReference type="ChEBI" id="CHEBI:140395"/>
        <dbReference type="EC" id="2.7.7.6"/>
    </reaction>
</comment>
<comment type="cofactor">
    <cofactor evidence="1">
        <name>Mg(2+)</name>
        <dbReference type="ChEBI" id="CHEBI:18420"/>
    </cofactor>
    <text evidence="1">Binds 1 Mg(2+) ion per subunit.</text>
</comment>
<comment type="cofactor">
    <cofactor evidence="1">
        <name>Zn(2+)</name>
        <dbReference type="ChEBI" id="CHEBI:29105"/>
    </cofactor>
    <text evidence="1">Binds 2 Zn(2+) ions per subunit.</text>
</comment>
<comment type="subunit">
    <text evidence="1">The RNAP catalytic core consists of 2 alpha, 1 beta, 1 beta' and 1 omega subunit. When a sigma factor is associated with the core the holoenzyme is formed, which can initiate transcription.</text>
</comment>
<comment type="similarity">
    <text evidence="1">Belongs to the RNA polymerase beta' chain family.</text>
</comment>
<dbReference type="EC" id="2.7.7.6" evidence="1"/>
<dbReference type="EMBL" id="CP000155">
    <property type="protein sequence ID" value="ABC32868.1"/>
    <property type="molecule type" value="Genomic_DNA"/>
</dbReference>
<dbReference type="RefSeq" id="WP_011399926.1">
    <property type="nucleotide sequence ID" value="NC_007645.1"/>
</dbReference>
<dbReference type="SMR" id="Q2S906"/>
<dbReference type="STRING" id="349521.HCH_06223"/>
<dbReference type="KEGG" id="hch:HCH_06223"/>
<dbReference type="eggNOG" id="COG0086">
    <property type="taxonomic scope" value="Bacteria"/>
</dbReference>
<dbReference type="HOGENOM" id="CLU_000524_3_1_6"/>
<dbReference type="OrthoDB" id="9815296at2"/>
<dbReference type="Proteomes" id="UP000000238">
    <property type="component" value="Chromosome"/>
</dbReference>
<dbReference type="GO" id="GO:0000428">
    <property type="term" value="C:DNA-directed RNA polymerase complex"/>
    <property type="evidence" value="ECO:0007669"/>
    <property type="project" value="UniProtKB-KW"/>
</dbReference>
<dbReference type="GO" id="GO:0003677">
    <property type="term" value="F:DNA binding"/>
    <property type="evidence" value="ECO:0007669"/>
    <property type="project" value="UniProtKB-UniRule"/>
</dbReference>
<dbReference type="GO" id="GO:0003899">
    <property type="term" value="F:DNA-directed RNA polymerase activity"/>
    <property type="evidence" value="ECO:0007669"/>
    <property type="project" value="UniProtKB-UniRule"/>
</dbReference>
<dbReference type="GO" id="GO:0000287">
    <property type="term" value="F:magnesium ion binding"/>
    <property type="evidence" value="ECO:0007669"/>
    <property type="project" value="UniProtKB-UniRule"/>
</dbReference>
<dbReference type="GO" id="GO:0008270">
    <property type="term" value="F:zinc ion binding"/>
    <property type="evidence" value="ECO:0007669"/>
    <property type="project" value="UniProtKB-UniRule"/>
</dbReference>
<dbReference type="GO" id="GO:0006351">
    <property type="term" value="P:DNA-templated transcription"/>
    <property type="evidence" value="ECO:0007669"/>
    <property type="project" value="UniProtKB-UniRule"/>
</dbReference>
<dbReference type="CDD" id="cd02655">
    <property type="entry name" value="RNAP_beta'_C"/>
    <property type="match status" value="1"/>
</dbReference>
<dbReference type="CDD" id="cd01609">
    <property type="entry name" value="RNAP_beta'_N"/>
    <property type="match status" value="1"/>
</dbReference>
<dbReference type="FunFam" id="1.10.132.30:FF:000003">
    <property type="entry name" value="DNA-directed RNA polymerase subunit beta"/>
    <property type="match status" value="1"/>
</dbReference>
<dbReference type="FunFam" id="1.10.150.390:FF:000002">
    <property type="entry name" value="DNA-directed RNA polymerase subunit beta"/>
    <property type="match status" value="1"/>
</dbReference>
<dbReference type="FunFam" id="1.10.40.90:FF:000001">
    <property type="entry name" value="DNA-directed RNA polymerase subunit beta"/>
    <property type="match status" value="1"/>
</dbReference>
<dbReference type="FunFam" id="4.10.860.120:FF:000001">
    <property type="entry name" value="DNA-directed RNA polymerase subunit beta"/>
    <property type="match status" value="1"/>
</dbReference>
<dbReference type="Gene3D" id="1.10.132.30">
    <property type="match status" value="1"/>
</dbReference>
<dbReference type="Gene3D" id="1.10.150.390">
    <property type="match status" value="1"/>
</dbReference>
<dbReference type="Gene3D" id="1.10.1790.20">
    <property type="match status" value="1"/>
</dbReference>
<dbReference type="Gene3D" id="1.10.40.90">
    <property type="match status" value="1"/>
</dbReference>
<dbReference type="Gene3D" id="2.40.40.20">
    <property type="match status" value="1"/>
</dbReference>
<dbReference type="Gene3D" id="2.40.50.100">
    <property type="match status" value="3"/>
</dbReference>
<dbReference type="Gene3D" id="4.10.860.120">
    <property type="entry name" value="RNA polymerase II, clamp domain"/>
    <property type="match status" value="1"/>
</dbReference>
<dbReference type="Gene3D" id="1.10.274.100">
    <property type="entry name" value="RNA polymerase Rpb1, domain 3"/>
    <property type="match status" value="1"/>
</dbReference>
<dbReference type="HAMAP" id="MF_01322">
    <property type="entry name" value="RNApol_bact_RpoC"/>
    <property type="match status" value="1"/>
</dbReference>
<dbReference type="InterPro" id="IPR045867">
    <property type="entry name" value="DNA-dir_RpoC_beta_prime"/>
</dbReference>
<dbReference type="InterPro" id="IPR012754">
    <property type="entry name" value="DNA-dir_RpoC_beta_prime_bact"/>
</dbReference>
<dbReference type="InterPro" id="IPR000722">
    <property type="entry name" value="RNA_pol_asu"/>
</dbReference>
<dbReference type="InterPro" id="IPR006592">
    <property type="entry name" value="RNA_pol_N"/>
</dbReference>
<dbReference type="InterPro" id="IPR007080">
    <property type="entry name" value="RNA_pol_Rpb1_1"/>
</dbReference>
<dbReference type="InterPro" id="IPR007066">
    <property type="entry name" value="RNA_pol_Rpb1_3"/>
</dbReference>
<dbReference type="InterPro" id="IPR042102">
    <property type="entry name" value="RNA_pol_Rpb1_3_sf"/>
</dbReference>
<dbReference type="InterPro" id="IPR007083">
    <property type="entry name" value="RNA_pol_Rpb1_4"/>
</dbReference>
<dbReference type="InterPro" id="IPR007081">
    <property type="entry name" value="RNA_pol_Rpb1_5"/>
</dbReference>
<dbReference type="InterPro" id="IPR044893">
    <property type="entry name" value="RNA_pol_Rpb1_clamp_domain"/>
</dbReference>
<dbReference type="InterPro" id="IPR038120">
    <property type="entry name" value="Rpb1_funnel_sf"/>
</dbReference>
<dbReference type="NCBIfam" id="TIGR02386">
    <property type="entry name" value="rpoC_TIGR"/>
    <property type="match status" value="1"/>
</dbReference>
<dbReference type="PANTHER" id="PTHR19376">
    <property type="entry name" value="DNA-DIRECTED RNA POLYMERASE"/>
    <property type="match status" value="1"/>
</dbReference>
<dbReference type="PANTHER" id="PTHR19376:SF54">
    <property type="entry name" value="DNA-DIRECTED RNA POLYMERASE SUBUNIT BETA"/>
    <property type="match status" value="1"/>
</dbReference>
<dbReference type="Pfam" id="PF04997">
    <property type="entry name" value="RNA_pol_Rpb1_1"/>
    <property type="match status" value="1"/>
</dbReference>
<dbReference type="Pfam" id="PF00623">
    <property type="entry name" value="RNA_pol_Rpb1_2"/>
    <property type="match status" value="2"/>
</dbReference>
<dbReference type="Pfam" id="PF04983">
    <property type="entry name" value="RNA_pol_Rpb1_3"/>
    <property type="match status" value="1"/>
</dbReference>
<dbReference type="Pfam" id="PF05000">
    <property type="entry name" value="RNA_pol_Rpb1_4"/>
    <property type="match status" value="1"/>
</dbReference>
<dbReference type="Pfam" id="PF04998">
    <property type="entry name" value="RNA_pol_Rpb1_5"/>
    <property type="match status" value="1"/>
</dbReference>
<dbReference type="SMART" id="SM00663">
    <property type="entry name" value="RPOLA_N"/>
    <property type="match status" value="1"/>
</dbReference>
<dbReference type="SUPFAM" id="SSF64484">
    <property type="entry name" value="beta and beta-prime subunits of DNA dependent RNA-polymerase"/>
    <property type="match status" value="1"/>
</dbReference>
<organism>
    <name type="scientific">Hahella chejuensis (strain KCTC 2396)</name>
    <dbReference type="NCBI Taxonomy" id="349521"/>
    <lineage>
        <taxon>Bacteria</taxon>
        <taxon>Pseudomonadati</taxon>
        <taxon>Pseudomonadota</taxon>
        <taxon>Gammaproteobacteria</taxon>
        <taxon>Oceanospirillales</taxon>
        <taxon>Hahellaceae</taxon>
        <taxon>Hahella</taxon>
    </lineage>
</organism>
<name>RPOC_HAHCH</name>
<gene>
    <name evidence="1" type="primary">rpoC</name>
    <name type="ordered locus">HCH_06223</name>
</gene>
<sequence>MKDLLNLLKNQNYAHEFDSIRISLASPDMIRSWSFGEVKKPETINYRTFKPERDGLFCAKIFGPIKDYECLCGKYKRLKHRGVICEKCGVEVAPANVRRERMGHIELASPVAHIWFLKSLPSRIGLLLDMTLRDIERVLYFESFIVIDPGMTTLEKGQLLSDEQYYEALEEFGDEFDARMGAEAIQGLLADLELEDEIERLREEIPNTNSETKIKKLSKRLKLMEAFAESGNHPEWMILTVLPVLPPDLRPLVPLDGGRFATSDLNDLYRRVINRNNRLKRLLELNAPDIIVRNEKRMLQESVDALLDNGRRGRAITGSNKRPLKSLADMIKGKQGRFRQNLLGKRVDYSGRSVIVVGPTLRLHQCGLPKKMALELFKPFIFSKLEHRGLATTIKAAKKMVEREEAVVWDILDEVIREHPVMLNRAPTLHRLGIQAFEPVLIEGKAIQLHPLVCTAYNADFDGDQMAVHVPLTLEAQLEARALMMSTNNILSPANGDPIIVPSQDVVLGLYFMTRERINAKGEGMVFSDIKEVQRAYGAKKVDLQAKVKVRIRDVVIDEDRNKTVTVSVLDTTVGRALLFDIFPEGLAFSLVNQNMTKKAISRLINACYRRVGLKETVIFADQIMYTGFYYATLSGASIGVNDFVIPDEKAKIIDAAENEVKEIESQFASGLLTQGEKYNKVIDIWSRANDKVSKAMMDRLGKEKVVNKDGKEVDQDSFNSVYIMADSGARGSAAQIRQLAGMRGLMAKPDGSIIETPITANFREGLNVLQYFISTHGARKGLADTALKTANSGYLTRRLVDVAQDLVVTDLDCGTSEGLLVTPHIEGGDVVVPLGDRVLGRVTASDVYSASDNQNVVVPAGTLLDETTVETLEKAGVDEILVRSPITCETKYGVCASCYGRDLARGHLVNVGEAIGVIAAQSIGEPGTQLTMRTFHIGGAASRASAVDNIQVKHGGTVRLHNLKHIERKNGNLVVVSRSSALAIADEAGREREWYKLPYGVELSVKQGQQVAAGEIVAKWDPHTHPIITEVGGKAIFVGVEEGITVKTQTDEITGLSNIEVMDPKDRPASGKDIRPMLQLLDANGKEMKFPGTDTPVQYFLPPNSLFSLKNGDTIEVGDVIARIPQESSKTRDITGGLPRVADLFEARKPKEPSILAEISGIVSFGKETKGKKRLVITPTDNTDPFEILIPKWRQLNVFEGESVEKGEVISDGPSNPHDILRLLGVGELAKYIINEIQDVYRLQGVVINDKHIEVIVRQMIRKVDVLSSGDTTLIKGDQVELVKLLEENEKAGEEAKMPARYERVLLGITKASLATESFISAASFQETTRVLTEAAVTGKQDHLRGLKENVVVGRLIPAGTGSAYHQERRRKRMQKEGGVSAADVVQALSAELNK</sequence>
<accession>Q2S906</accession>
<keyword id="KW-0240">DNA-directed RNA polymerase</keyword>
<keyword id="KW-0460">Magnesium</keyword>
<keyword id="KW-0479">Metal-binding</keyword>
<keyword id="KW-0548">Nucleotidyltransferase</keyword>
<keyword id="KW-1185">Reference proteome</keyword>
<keyword id="KW-0804">Transcription</keyword>
<keyword id="KW-0808">Transferase</keyword>
<keyword id="KW-0862">Zinc</keyword>
<evidence type="ECO:0000255" key="1">
    <source>
        <dbReference type="HAMAP-Rule" id="MF_01322"/>
    </source>
</evidence>
<protein>
    <recommendedName>
        <fullName evidence="1">DNA-directed RNA polymerase subunit beta'</fullName>
        <shortName evidence="1">RNAP subunit beta'</shortName>
        <ecNumber evidence="1">2.7.7.6</ecNumber>
    </recommendedName>
    <alternativeName>
        <fullName evidence="1">RNA polymerase subunit beta'</fullName>
    </alternativeName>
    <alternativeName>
        <fullName evidence="1">Transcriptase subunit beta'</fullName>
    </alternativeName>
</protein>